<protein>
    <recommendedName>
        <fullName evidence="1">Citrate lyase acyl carrier protein</fullName>
    </recommendedName>
    <alternativeName>
        <fullName evidence="1">Citrate lyase gamma chain</fullName>
    </alternativeName>
</protein>
<comment type="function">
    <text evidence="1">Covalent carrier of the coenzyme of citrate lyase.</text>
</comment>
<comment type="subunit">
    <text evidence="1">Oligomer with a subunit composition of (alpha,beta,gamma)6.</text>
</comment>
<comment type="subcellular location">
    <subcellularLocation>
        <location evidence="1">Cytoplasm</location>
    </subcellularLocation>
</comment>
<comment type="similarity">
    <text evidence="1">Belongs to the CitD family.</text>
</comment>
<gene>
    <name evidence="1" type="primary">citD</name>
    <name type="ordered locus">LL1189</name>
    <name type="ORF">L0039</name>
</gene>
<feature type="chain" id="PRO_0000214702" description="Citrate lyase acyl carrier protein">
    <location>
        <begin position="1"/>
        <end position="96"/>
    </location>
</feature>
<feature type="modified residue" description="O-(phosphoribosyl dephospho-coenzyme A)serine" evidence="1">
    <location>
        <position position="14"/>
    </location>
</feature>
<sequence>MEIKQHALAGTLESSDVQIMIAPANNGISIDLISDVKKQFGKQIEATVRQVLAAYAIENADVQVIDKGALDLVIKARAIAVVERAIEAKDLNWEVL</sequence>
<dbReference type="EMBL" id="AE005176">
    <property type="protein sequence ID" value="AAK05287.1"/>
    <property type="molecule type" value="Genomic_DNA"/>
</dbReference>
<dbReference type="PIR" id="E86773">
    <property type="entry name" value="E86773"/>
</dbReference>
<dbReference type="RefSeq" id="NP_267345.1">
    <property type="nucleotide sequence ID" value="NC_002662.1"/>
</dbReference>
<dbReference type="RefSeq" id="WP_010905811.1">
    <property type="nucleotide sequence ID" value="NC_002662.1"/>
</dbReference>
<dbReference type="SMR" id="Q9CGA9"/>
<dbReference type="PaxDb" id="272623-L0039"/>
<dbReference type="EnsemblBacteria" id="AAK05287">
    <property type="protein sequence ID" value="AAK05287"/>
    <property type="gene ID" value="L0039"/>
</dbReference>
<dbReference type="KEGG" id="lla:L0039"/>
<dbReference type="PATRIC" id="fig|272623.7.peg.1276"/>
<dbReference type="eggNOG" id="COG3052">
    <property type="taxonomic scope" value="Bacteria"/>
</dbReference>
<dbReference type="HOGENOM" id="CLU_158489_0_0_9"/>
<dbReference type="OrthoDB" id="1120942at2"/>
<dbReference type="Proteomes" id="UP000002196">
    <property type="component" value="Chromosome"/>
</dbReference>
<dbReference type="GO" id="GO:0005737">
    <property type="term" value="C:cytoplasm"/>
    <property type="evidence" value="ECO:0007669"/>
    <property type="project" value="UniProtKB-SubCell"/>
</dbReference>
<dbReference type="HAMAP" id="MF_00805">
    <property type="entry name" value="CitD"/>
    <property type="match status" value="1"/>
</dbReference>
<dbReference type="InterPro" id="IPR006495">
    <property type="entry name" value="CitD"/>
</dbReference>
<dbReference type="InterPro" id="IPR023439">
    <property type="entry name" value="Mal_deCO2ase/Cit_lyase_ACP"/>
</dbReference>
<dbReference type="NCBIfam" id="TIGR01608">
    <property type="entry name" value="citD"/>
    <property type="match status" value="1"/>
</dbReference>
<dbReference type="NCBIfam" id="NF009726">
    <property type="entry name" value="PRK13253.1"/>
    <property type="match status" value="1"/>
</dbReference>
<dbReference type="Pfam" id="PF06857">
    <property type="entry name" value="ACP"/>
    <property type="match status" value="1"/>
</dbReference>
<dbReference type="PIRSF" id="PIRSF002736">
    <property type="entry name" value="Citrt_lyas_gamma"/>
    <property type="match status" value="1"/>
</dbReference>
<evidence type="ECO:0000255" key="1">
    <source>
        <dbReference type="HAMAP-Rule" id="MF_00805"/>
    </source>
</evidence>
<name>CITD_LACLA</name>
<accession>Q9CGA9</accession>
<organism>
    <name type="scientific">Lactococcus lactis subsp. lactis (strain IL1403)</name>
    <name type="common">Streptococcus lactis</name>
    <dbReference type="NCBI Taxonomy" id="272623"/>
    <lineage>
        <taxon>Bacteria</taxon>
        <taxon>Bacillati</taxon>
        <taxon>Bacillota</taxon>
        <taxon>Bacilli</taxon>
        <taxon>Lactobacillales</taxon>
        <taxon>Streptococcaceae</taxon>
        <taxon>Lactococcus</taxon>
    </lineage>
</organism>
<keyword id="KW-0963">Cytoplasm</keyword>
<keyword id="KW-0597">Phosphoprotein</keyword>
<keyword id="KW-1185">Reference proteome</keyword>
<reference key="1">
    <citation type="journal article" date="2001" name="Genome Res.">
        <title>The complete genome sequence of the lactic acid bacterium Lactococcus lactis ssp. lactis IL1403.</title>
        <authorList>
            <person name="Bolotin A."/>
            <person name="Wincker P."/>
            <person name="Mauger S."/>
            <person name="Jaillon O."/>
            <person name="Malarme K."/>
            <person name="Weissenbach J."/>
            <person name="Ehrlich S.D."/>
            <person name="Sorokin A."/>
        </authorList>
    </citation>
    <scope>NUCLEOTIDE SEQUENCE [LARGE SCALE GENOMIC DNA]</scope>
    <source>
        <strain>IL1403</strain>
    </source>
</reference>
<proteinExistence type="inferred from homology"/>